<sequence>MPFSLGQRWISDTESELGLGTVVGVEGRMVTVLFPATGENRLFSRTEAPLTRVIYNPGDTVESHEEWKLTVTEVEEKDSLIIYHGTHSETGEQVSLRETLLNHNIRFNKPQDRLFAGQIDRLDRFNVRYQCQLLRNKLATSDLLGLQGPRVGLIPHQQWIAHEVGQRFAPRVLLADEVGLGKTIEAGLIIHQQLLTGRAERILVIVPDTLRHQWLVEMLRRFNLRFSVFDEDRCVEAYADHDNPFYTEQLVICSLDLLRKKRRLDQALDADWDLMVVDEAHHLEWSEEAPSRAYQIVEALSEEIPGVLLLTATPDQLGHQSHFARLRLLDPDRFYDYEAFLKEEDSYKDVATAADALASGEILSDESIAGLTQLLAEKDISASITLIQDDAADADSRFQARDELLQDLLDRHGTGRVLYRNSRASVKGFPVRNLHVHPQKMPEQYVTAYRVSSMMNKHLDTNAKVRQVLSPEKIYQDFDSGSAAWWKFDPRVDWLIDFLKNNRSKKVLIIASQAETALSLEEALRTREGIQATVFHEGMSIIERDKAGAYFAQESGGAQALICSEIGSEGRNFQFASNLVLFDLPLNPDLLEQRIGRLDRIGQKNDVEIHLPFLANTAQERLMQWYHQGLNAFECTCPSGHILFNEFSGELLESLLNNDEAVLESLLDGTKARYQELKVAMEQGRDKLLEINSHGGERANQLVKTLADKDEDTQLIGSVIRLWDIIGVEQEDSGENAIVLHPSEHMMFPTYPGLPEDGITVTFDREMALSRDDIALITQEHPLVQTGLDLITSSETGTTSVAVLKNKALPAGTIFLELIYLADASAPKSSQLYRYLPPTPIRVLLDKNGNNLSDNVTYESFNKQLSAVNRHIASKLVNASQAILHPLFAKAESFATTQLETLTECAREKMTSQLSGELERLKALKAVNPNIRDEELSHLSEQMAELNRYLDSSQLQLDAIRLVLVSHA</sequence>
<feature type="chain" id="PRO_1000088385" description="RNA polymerase-associated protein RapA">
    <location>
        <begin position="1"/>
        <end position="968"/>
    </location>
</feature>
<feature type="domain" description="Helicase ATP-binding" evidence="1">
    <location>
        <begin position="163"/>
        <end position="332"/>
    </location>
</feature>
<feature type="domain" description="Helicase C-terminal" evidence="1">
    <location>
        <begin position="491"/>
        <end position="678"/>
    </location>
</feature>
<feature type="short sequence motif" description="DEAH box">
    <location>
        <begin position="278"/>
        <end position="281"/>
    </location>
</feature>
<feature type="binding site" evidence="1">
    <location>
        <begin position="176"/>
        <end position="183"/>
    </location>
    <ligand>
        <name>ATP</name>
        <dbReference type="ChEBI" id="CHEBI:30616"/>
    </ligand>
</feature>
<name>RAPA_SHEPA</name>
<comment type="function">
    <text evidence="1">Transcription regulator that activates transcription by stimulating RNA polymerase (RNAP) recycling in case of stress conditions such as supercoiled DNA or high salt concentrations. Probably acts by releasing the RNAP, when it is trapped or immobilized on tightly supercoiled DNA. Does not activate transcription on linear DNA. Probably not involved in DNA repair.</text>
</comment>
<comment type="subunit">
    <text evidence="1">Interacts with the RNAP. Has a higher affinity for the core RNAP than for the holoenzyme. Its ATPase activity is stimulated by binding to RNAP.</text>
</comment>
<comment type="similarity">
    <text evidence="1">Belongs to the SNF2/RAD54 helicase family. RapA subfamily.</text>
</comment>
<organism>
    <name type="scientific">Shewanella pealeana (strain ATCC 700345 / ANG-SQ1)</name>
    <dbReference type="NCBI Taxonomy" id="398579"/>
    <lineage>
        <taxon>Bacteria</taxon>
        <taxon>Pseudomonadati</taxon>
        <taxon>Pseudomonadota</taxon>
        <taxon>Gammaproteobacteria</taxon>
        <taxon>Alteromonadales</taxon>
        <taxon>Shewanellaceae</taxon>
        <taxon>Shewanella</taxon>
    </lineage>
</organism>
<evidence type="ECO:0000255" key="1">
    <source>
        <dbReference type="HAMAP-Rule" id="MF_01821"/>
    </source>
</evidence>
<accession>A8H8X8</accession>
<gene>
    <name evidence="1" type="primary">rapA</name>
    <name type="ordered locus">Spea_3704</name>
</gene>
<protein>
    <recommendedName>
        <fullName evidence="1">RNA polymerase-associated protein RapA</fullName>
        <ecNumber evidence="1">3.6.4.-</ecNumber>
    </recommendedName>
    <alternativeName>
        <fullName evidence="1">ATP-dependent helicase HepA</fullName>
    </alternativeName>
</protein>
<keyword id="KW-0010">Activator</keyword>
<keyword id="KW-0067">ATP-binding</keyword>
<keyword id="KW-0238">DNA-binding</keyword>
<keyword id="KW-0347">Helicase</keyword>
<keyword id="KW-0378">Hydrolase</keyword>
<keyword id="KW-0547">Nucleotide-binding</keyword>
<keyword id="KW-1185">Reference proteome</keyword>
<keyword id="KW-0804">Transcription</keyword>
<keyword id="KW-0805">Transcription regulation</keyword>
<proteinExistence type="inferred from homology"/>
<reference key="1">
    <citation type="submission" date="2007-10" db="EMBL/GenBank/DDBJ databases">
        <title>Complete sequence of Shewanella pealeana ATCC 700345.</title>
        <authorList>
            <consortium name="US DOE Joint Genome Institute"/>
            <person name="Copeland A."/>
            <person name="Lucas S."/>
            <person name="Lapidus A."/>
            <person name="Barry K."/>
            <person name="Glavina del Rio T."/>
            <person name="Dalin E."/>
            <person name="Tice H."/>
            <person name="Pitluck S."/>
            <person name="Chertkov O."/>
            <person name="Brettin T."/>
            <person name="Bruce D."/>
            <person name="Detter J.C."/>
            <person name="Han C."/>
            <person name="Schmutz J."/>
            <person name="Larimer F."/>
            <person name="Land M."/>
            <person name="Hauser L."/>
            <person name="Kyrpides N."/>
            <person name="Kim E."/>
            <person name="Zhao J.-S.Z."/>
            <person name="Manno D."/>
            <person name="Hawari J."/>
            <person name="Richardson P."/>
        </authorList>
    </citation>
    <scope>NUCLEOTIDE SEQUENCE [LARGE SCALE GENOMIC DNA]</scope>
    <source>
        <strain>ATCC 700345 / ANG-SQ1</strain>
    </source>
</reference>
<dbReference type="EC" id="3.6.4.-" evidence="1"/>
<dbReference type="EMBL" id="CP000851">
    <property type="protein sequence ID" value="ABV89015.1"/>
    <property type="molecule type" value="Genomic_DNA"/>
</dbReference>
<dbReference type="RefSeq" id="WP_012156899.1">
    <property type="nucleotide sequence ID" value="NC_009901.1"/>
</dbReference>
<dbReference type="SMR" id="A8H8X8"/>
<dbReference type="STRING" id="398579.Spea_3704"/>
<dbReference type="KEGG" id="spl:Spea_3704"/>
<dbReference type="eggNOG" id="COG0553">
    <property type="taxonomic scope" value="Bacteria"/>
</dbReference>
<dbReference type="HOGENOM" id="CLU_011520_0_0_6"/>
<dbReference type="OrthoDB" id="9814088at2"/>
<dbReference type="Proteomes" id="UP000002608">
    <property type="component" value="Chromosome"/>
</dbReference>
<dbReference type="GO" id="GO:0005524">
    <property type="term" value="F:ATP binding"/>
    <property type="evidence" value="ECO:0007669"/>
    <property type="project" value="UniProtKB-UniRule"/>
</dbReference>
<dbReference type="GO" id="GO:0003677">
    <property type="term" value="F:DNA binding"/>
    <property type="evidence" value="ECO:0007669"/>
    <property type="project" value="UniProtKB-KW"/>
</dbReference>
<dbReference type="GO" id="GO:0004386">
    <property type="term" value="F:helicase activity"/>
    <property type="evidence" value="ECO:0007669"/>
    <property type="project" value="UniProtKB-UniRule"/>
</dbReference>
<dbReference type="GO" id="GO:0016817">
    <property type="term" value="F:hydrolase activity, acting on acid anhydrides"/>
    <property type="evidence" value="ECO:0007669"/>
    <property type="project" value="InterPro"/>
</dbReference>
<dbReference type="GO" id="GO:0006355">
    <property type="term" value="P:regulation of DNA-templated transcription"/>
    <property type="evidence" value="ECO:0007669"/>
    <property type="project" value="UniProtKB-UniRule"/>
</dbReference>
<dbReference type="CDD" id="cd18011">
    <property type="entry name" value="DEXDc_RapA"/>
    <property type="match status" value="1"/>
</dbReference>
<dbReference type="CDD" id="cd18793">
    <property type="entry name" value="SF2_C_SNF"/>
    <property type="match status" value="1"/>
</dbReference>
<dbReference type="Gene3D" id="2.30.30.140">
    <property type="match status" value="1"/>
</dbReference>
<dbReference type="Gene3D" id="2.30.30.930">
    <property type="match status" value="1"/>
</dbReference>
<dbReference type="Gene3D" id="3.30.360.80">
    <property type="match status" value="1"/>
</dbReference>
<dbReference type="Gene3D" id="6.10.140.1500">
    <property type="match status" value="1"/>
</dbReference>
<dbReference type="Gene3D" id="6.10.140.2230">
    <property type="match status" value="1"/>
</dbReference>
<dbReference type="Gene3D" id="3.40.50.300">
    <property type="entry name" value="P-loop containing nucleotide triphosphate hydrolases"/>
    <property type="match status" value="1"/>
</dbReference>
<dbReference type="Gene3D" id="3.40.50.10810">
    <property type="entry name" value="Tandem AAA-ATPase domain"/>
    <property type="match status" value="1"/>
</dbReference>
<dbReference type="HAMAP" id="MF_01821">
    <property type="entry name" value="Helicase_RapA"/>
    <property type="match status" value="1"/>
</dbReference>
<dbReference type="InterPro" id="IPR014001">
    <property type="entry name" value="Helicase_ATP-bd"/>
</dbReference>
<dbReference type="InterPro" id="IPR001650">
    <property type="entry name" value="Helicase_C-like"/>
</dbReference>
<dbReference type="InterPro" id="IPR023949">
    <property type="entry name" value="Helicase_RapA"/>
</dbReference>
<dbReference type="InterPro" id="IPR027417">
    <property type="entry name" value="P-loop_NTPase"/>
</dbReference>
<dbReference type="InterPro" id="IPR022737">
    <property type="entry name" value="RapA_C"/>
</dbReference>
<dbReference type="InterPro" id="IPR038718">
    <property type="entry name" value="SNF2-like_sf"/>
</dbReference>
<dbReference type="InterPro" id="IPR049730">
    <property type="entry name" value="SNF2/RAD54-like_C"/>
</dbReference>
<dbReference type="InterPro" id="IPR000330">
    <property type="entry name" value="SNF2_N"/>
</dbReference>
<dbReference type="InterPro" id="IPR040765">
    <property type="entry name" value="Tudor_1_RapA"/>
</dbReference>
<dbReference type="InterPro" id="IPR040766">
    <property type="entry name" value="Tudor_2_RapA"/>
</dbReference>
<dbReference type="NCBIfam" id="NF003426">
    <property type="entry name" value="PRK04914.1"/>
    <property type="match status" value="1"/>
</dbReference>
<dbReference type="PANTHER" id="PTHR45766">
    <property type="entry name" value="DNA ANNEALING HELICASE AND ENDONUCLEASE ZRANB3 FAMILY MEMBER"/>
    <property type="match status" value="1"/>
</dbReference>
<dbReference type="PANTHER" id="PTHR45766:SF6">
    <property type="entry name" value="SWI_SNF-RELATED MATRIX-ASSOCIATED ACTIN-DEPENDENT REGULATOR OF CHROMATIN SUBFAMILY A-LIKE PROTEIN 1"/>
    <property type="match status" value="1"/>
</dbReference>
<dbReference type="Pfam" id="PF00271">
    <property type="entry name" value="Helicase_C"/>
    <property type="match status" value="1"/>
</dbReference>
<dbReference type="Pfam" id="PF12137">
    <property type="entry name" value="RapA_C"/>
    <property type="match status" value="1"/>
</dbReference>
<dbReference type="Pfam" id="PF00176">
    <property type="entry name" value="SNF2-rel_dom"/>
    <property type="match status" value="1"/>
</dbReference>
<dbReference type="Pfam" id="PF18339">
    <property type="entry name" value="Tudor_1_RapA"/>
    <property type="match status" value="1"/>
</dbReference>
<dbReference type="Pfam" id="PF18337">
    <property type="entry name" value="Tudor_RapA"/>
    <property type="match status" value="1"/>
</dbReference>
<dbReference type="SMART" id="SM00487">
    <property type="entry name" value="DEXDc"/>
    <property type="match status" value="1"/>
</dbReference>
<dbReference type="SMART" id="SM00490">
    <property type="entry name" value="HELICc"/>
    <property type="match status" value="1"/>
</dbReference>
<dbReference type="SUPFAM" id="SSF52540">
    <property type="entry name" value="P-loop containing nucleoside triphosphate hydrolases"/>
    <property type="match status" value="2"/>
</dbReference>
<dbReference type="PROSITE" id="PS51192">
    <property type="entry name" value="HELICASE_ATP_BIND_1"/>
    <property type="match status" value="1"/>
</dbReference>
<dbReference type="PROSITE" id="PS51194">
    <property type="entry name" value="HELICASE_CTER"/>
    <property type="match status" value="1"/>
</dbReference>